<comment type="subcellular location">
    <subcellularLocation>
        <location evidence="3">Membrane</location>
        <topology evidence="3">Multi-pass membrane protein</topology>
    </subcellularLocation>
</comment>
<comment type="similarity">
    <text evidence="3">Belongs to the major facilitator superfamily. Allantoate permease family.</text>
</comment>
<dbReference type="EMBL" id="CU329670">
    <property type="protein sequence ID" value="CAB11241.1"/>
    <property type="molecule type" value="Genomic_DNA"/>
</dbReference>
<dbReference type="PIR" id="T38034">
    <property type="entry name" value="T38034"/>
</dbReference>
<dbReference type="RefSeq" id="NP_594800.1">
    <property type="nucleotide sequence ID" value="NM_001020228.2"/>
</dbReference>
<dbReference type="SMR" id="O13879"/>
<dbReference type="BioGRID" id="278592">
    <property type="interactions" value="6"/>
</dbReference>
<dbReference type="FunCoup" id="O13879">
    <property type="interactions" value="1"/>
</dbReference>
<dbReference type="PaxDb" id="4896-SPAC1B3.15c.1"/>
<dbReference type="EnsemblFungi" id="SPAC1B3.15c.1">
    <property type="protein sequence ID" value="SPAC1B3.15c.1:pep"/>
    <property type="gene ID" value="SPAC1B3.15c"/>
</dbReference>
<dbReference type="KEGG" id="spo:2542116"/>
<dbReference type="PomBase" id="SPAC1B3.15c"/>
<dbReference type="VEuPathDB" id="FungiDB:SPAC1B3.15c"/>
<dbReference type="eggNOG" id="KOG2533">
    <property type="taxonomic scope" value="Eukaryota"/>
</dbReference>
<dbReference type="HOGENOM" id="CLU_001265_0_0_1"/>
<dbReference type="InParanoid" id="O13879"/>
<dbReference type="OMA" id="WLFCVLY"/>
<dbReference type="PhylomeDB" id="O13879"/>
<dbReference type="PRO" id="PR:O13879"/>
<dbReference type="Proteomes" id="UP000002485">
    <property type="component" value="Chromosome I"/>
</dbReference>
<dbReference type="GO" id="GO:0005794">
    <property type="term" value="C:Golgi apparatus"/>
    <property type="evidence" value="ECO:0007005"/>
    <property type="project" value="PomBase"/>
</dbReference>
<dbReference type="GO" id="GO:0005886">
    <property type="term" value="C:plasma membrane"/>
    <property type="evidence" value="ECO:0000318"/>
    <property type="project" value="GO_Central"/>
</dbReference>
<dbReference type="GO" id="GO:0015295">
    <property type="term" value="F:solute:proton symporter activity"/>
    <property type="evidence" value="ECO:0000318"/>
    <property type="project" value="GO_Central"/>
</dbReference>
<dbReference type="CDD" id="cd17327">
    <property type="entry name" value="MFS_FEN2_like"/>
    <property type="match status" value="1"/>
</dbReference>
<dbReference type="FunFam" id="1.20.1250.20:FF:000399">
    <property type="entry name" value="MFS general substrate transporter"/>
    <property type="match status" value="1"/>
</dbReference>
<dbReference type="Gene3D" id="1.20.1250.20">
    <property type="entry name" value="MFS general substrate transporter like domains"/>
    <property type="match status" value="2"/>
</dbReference>
<dbReference type="InterPro" id="IPR011701">
    <property type="entry name" value="MFS"/>
</dbReference>
<dbReference type="InterPro" id="IPR036259">
    <property type="entry name" value="MFS_trans_sf"/>
</dbReference>
<dbReference type="PANTHER" id="PTHR43791:SF96">
    <property type="entry name" value="MEMBRANE TRANSPORTER"/>
    <property type="match status" value="1"/>
</dbReference>
<dbReference type="PANTHER" id="PTHR43791">
    <property type="entry name" value="PERMEASE-RELATED"/>
    <property type="match status" value="1"/>
</dbReference>
<dbReference type="Pfam" id="PF07690">
    <property type="entry name" value="MFS_1"/>
    <property type="match status" value="1"/>
</dbReference>
<dbReference type="SUPFAM" id="SSF103473">
    <property type="entry name" value="MFS general substrate transporter"/>
    <property type="match status" value="1"/>
</dbReference>
<feature type="chain" id="PRO_0000121375" description="Uncharacterized transporter C1B3.15C">
    <location>
        <begin position="1"/>
        <end position="628"/>
    </location>
</feature>
<feature type="transmembrane region" description="Helical" evidence="1">
    <location>
        <begin position="157"/>
        <end position="177"/>
    </location>
</feature>
<feature type="transmembrane region" description="Helical" evidence="1">
    <location>
        <begin position="203"/>
        <end position="223"/>
    </location>
</feature>
<feature type="transmembrane region" description="Helical" evidence="1">
    <location>
        <begin position="230"/>
        <end position="250"/>
    </location>
</feature>
<feature type="transmembrane region" description="Helical" evidence="1">
    <location>
        <begin position="259"/>
        <end position="279"/>
    </location>
</feature>
<feature type="transmembrane region" description="Helical" evidence="1">
    <location>
        <begin position="294"/>
        <end position="314"/>
    </location>
</feature>
<feature type="transmembrane region" description="Helical" evidence="1">
    <location>
        <begin position="324"/>
        <end position="344"/>
    </location>
</feature>
<feature type="transmembrane region" description="Helical" evidence="1">
    <location>
        <begin position="417"/>
        <end position="437"/>
    </location>
</feature>
<feature type="transmembrane region" description="Helical" evidence="1">
    <location>
        <begin position="454"/>
        <end position="474"/>
    </location>
</feature>
<feature type="transmembrane region" description="Helical" evidence="1">
    <location>
        <begin position="483"/>
        <end position="503"/>
    </location>
</feature>
<feature type="transmembrane region" description="Helical" evidence="1">
    <location>
        <begin position="511"/>
        <end position="531"/>
    </location>
</feature>
<feature type="transmembrane region" description="Helical" evidence="1">
    <location>
        <begin position="542"/>
        <end position="562"/>
    </location>
</feature>
<feature type="transmembrane region" description="Helical" evidence="1">
    <location>
        <begin position="583"/>
        <end position="603"/>
    </location>
</feature>
<feature type="region of interest" description="Disordered" evidence="2">
    <location>
        <begin position="1"/>
        <end position="65"/>
    </location>
</feature>
<feature type="region of interest" description="Disordered" evidence="2">
    <location>
        <begin position="80"/>
        <end position="125"/>
    </location>
</feature>
<feature type="compositionally biased region" description="Low complexity" evidence="2">
    <location>
        <begin position="12"/>
        <end position="21"/>
    </location>
</feature>
<feature type="compositionally biased region" description="Polar residues" evidence="2">
    <location>
        <begin position="25"/>
        <end position="37"/>
    </location>
</feature>
<feature type="compositionally biased region" description="Low complexity" evidence="2">
    <location>
        <begin position="48"/>
        <end position="64"/>
    </location>
</feature>
<feature type="compositionally biased region" description="Low complexity" evidence="2">
    <location>
        <begin position="87"/>
        <end position="102"/>
    </location>
</feature>
<feature type="compositionally biased region" description="Basic and acidic residues" evidence="2">
    <location>
        <begin position="103"/>
        <end position="116"/>
    </location>
</feature>
<name>YE1F_SCHPO</name>
<sequence>MDTNTLPPKPSISPSIASSFPTVKPFSSQNSTTSNPELSHIEKESNASSIIISQQPLSPSNISSAAPLDETHIATKASASLRNNNVSPHIPSPSSFSSSSSSDLDKSMLDEKHPDSEDITAVSLSTPPFPESIDVARFSSEEKKILSRIRRKLDLRIITCLWITYFLSRSVTYSISLSLTMNKHQGHSLLQTVSGLNYHTLSVGTGLSYVSLIIFDLPSNLLMTRADPRLWLSRIQVTTGIIGACHAVLGTKGSSASGFIALRFFNGLAIAGMWPGFAFYTSRFYRDQHLGKRIGWYYTAAQISSVATSLLSAAFQKMDGLHGLYGYQWMFLIWGVVAFTQGLFLPRWLPCIKHNQHNEKWISWIRIPKFLGFLKASENTGLTPEEEEVHAIYMAEMQVGKSWTLTDLADAFLDVRLWPPIFMFFGVVGISNGLVNYSSLIISEINENFSSVTVSLLVAPIWVFDAIAILTVLPLHDRFHKKMLFFVGSCLFVLAGLLITTFVSNVWGRYVGLLILGFGLGPTVPIIMTWVSSAMGPSHGDVGVAAGLAIVSGLGNLGSVVATSALYSGWKADTTFRRSNETMCGMVGIAIVASIVMHMVQKFNIRRFPFKRIYACLSERRKKELSVT</sequence>
<reference key="1">
    <citation type="journal article" date="2002" name="Nature">
        <title>The genome sequence of Schizosaccharomyces pombe.</title>
        <authorList>
            <person name="Wood V."/>
            <person name="Gwilliam R."/>
            <person name="Rajandream M.A."/>
            <person name="Lyne M.H."/>
            <person name="Lyne R."/>
            <person name="Stewart A."/>
            <person name="Sgouros J.G."/>
            <person name="Peat N."/>
            <person name="Hayles J."/>
            <person name="Baker S.G."/>
            <person name="Basham D."/>
            <person name="Bowman S."/>
            <person name="Brooks K."/>
            <person name="Brown D."/>
            <person name="Brown S."/>
            <person name="Chillingworth T."/>
            <person name="Churcher C.M."/>
            <person name="Collins M."/>
            <person name="Connor R."/>
            <person name="Cronin A."/>
            <person name="Davis P."/>
            <person name="Feltwell T."/>
            <person name="Fraser A."/>
            <person name="Gentles S."/>
            <person name="Goble A."/>
            <person name="Hamlin N."/>
            <person name="Harris D.E."/>
            <person name="Hidalgo J."/>
            <person name="Hodgson G."/>
            <person name="Holroyd S."/>
            <person name="Hornsby T."/>
            <person name="Howarth S."/>
            <person name="Huckle E.J."/>
            <person name="Hunt S."/>
            <person name="Jagels K."/>
            <person name="James K.D."/>
            <person name="Jones L."/>
            <person name="Jones M."/>
            <person name="Leather S."/>
            <person name="McDonald S."/>
            <person name="McLean J."/>
            <person name="Mooney P."/>
            <person name="Moule S."/>
            <person name="Mungall K.L."/>
            <person name="Murphy L.D."/>
            <person name="Niblett D."/>
            <person name="Odell C."/>
            <person name="Oliver K."/>
            <person name="O'Neil S."/>
            <person name="Pearson D."/>
            <person name="Quail M.A."/>
            <person name="Rabbinowitsch E."/>
            <person name="Rutherford K.M."/>
            <person name="Rutter S."/>
            <person name="Saunders D."/>
            <person name="Seeger K."/>
            <person name="Sharp S."/>
            <person name="Skelton J."/>
            <person name="Simmonds M.N."/>
            <person name="Squares R."/>
            <person name="Squares S."/>
            <person name="Stevens K."/>
            <person name="Taylor K."/>
            <person name="Taylor R.G."/>
            <person name="Tivey A."/>
            <person name="Walsh S.V."/>
            <person name="Warren T."/>
            <person name="Whitehead S."/>
            <person name="Woodward J.R."/>
            <person name="Volckaert G."/>
            <person name="Aert R."/>
            <person name="Robben J."/>
            <person name="Grymonprez B."/>
            <person name="Weltjens I."/>
            <person name="Vanstreels E."/>
            <person name="Rieger M."/>
            <person name="Schaefer M."/>
            <person name="Mueller-Auer S."/>
            <person name="Gabel C."/>
            <person name="Fuchs M."/>
            <person name="Duesterhoeft A."/>
            <person name="Fritzc C."/>
            <person name="Holzer E."/>
            <person name="Moestl D."/>
            <person name="Hilbert H."/>
            <person name="Borzym K."/>
            <person name="Langer I."/>
            <person name="Beck A."/>
            <person name="Lehrach H."/>
            <person name="Reinhardt R."/>
            <person name="Pohl T.M."/>
            <person name="Eger P."/>
            <person name="Zimmermann W."/>
            <person name="Wedler H."/>
            <person name="Wambutt R."/>
            <person name="Purnelle B."/>
            <person name="Goffeau A."/>
            <person name="Cadieu E."/>
            <person name="Dreano S."/>
            <person name="Gloux S."/>
            <person name="Lelaure V."/>
            <person name="Mottier S."/>
            <person name="Galibert F."/>
            <person name="Aves S.J."/>
            <person name="Xiang Z."/>
            <person name="Hunt C."/>
            <person name="Moore K."/>
            <person name="Hurst S.M."/>
            <person name="Lucas M."/>
            <person name="Rochet M."/>
            <person name="Gaillardin C."/>
            <person name="Tallada V.A."/>
            <person name="Garzon A."/>
            <person name="Thode G."/>
            <person name="Daga R.R."/>
            <person name="Cruzado L."/>
            <person name="Jimenez J."/>
            <person name="Sanchez M."/>
            <person name="del Rey F."/>
            <person name="Benito J."/>
            <person name="Dominguez A."/>
            <person name="Revuelta J.L."/>
            <person name="Moreno S."/>
            <person name="Armstrong J."/>
            <person name="Forsburg S.L."/>
            <person name="Cerutti L."/>
            <person name="Lowe T."/>
            <person name="McCombie W.R."/>
            <person name="Paulsen I."/>
            <person name="Potashkin J."/>
            <person name="Shpakovski G.V."/>
            <person name="Ussery D."/>
            <person name="Barrell B.G."/>
            <person name="Nurse P."/>
        </authorList>
    </citation>
    <scope>NUCLEOTIDE SEQUENCE [LARGE SCALE GENOMIC DNA]</scope>
    <source>
        <strain>972 / ATCC 24843</strain>
    </source>
</reference>
<accession>O13879</accession>
<organism>
    <name type="scientific">Schizosaccharomyces pombe (strain 972 / ATCC 24843)</name>
    <name type="common">Fission yeast</name>
    <dbReference type="NCBI Taxonomy" id="284812"/>
    <lineage>
        <taxon>Eukaryota</taxon>
        <taxon>Fungi</taxon>
        <taxon>Dikarya</taxon>
        <taxon>Ascomycota</taxon>
        <taxon>Taphrinomycotina</taxon>
        <taxon>Schizosaccharomycetes</taxon>
        <taxon>Schizosaccharomycetales</taxon>
        <taxon>Schizosaccharomycetaceae</taxon>
        <taxon>Schizosaccharomyces</taxon>
    </lineage>
</organism>
<gene>
    <name type="ORF">SPAC1B3.15c</name>
</gene>
<keyword id="KW-0472">Membrane</keyword>
<keyword id="KW-1185">Reference proteome</keyword>
<keyword id="KW-0812">Transmembrane</keyword>
<keyword id="KW-1133">Transmembrane helix</keyword>
<keyword id="KW-0813">Transport</keyword>
<protein>
    <recommendedName>
        <fullName>Uncharacterized transporter C1B3.15C</fullName>
    </recommendedName>
</protein>
<evidence type="ECO:0000255" key="1"/>
<evidence type="ECO:0000256" key="2">
    <source>
        <dbReference type="SAM" id="MobiDB-lite"/>
    </source>
</evidence>
<evidence type="ECO:0000305" key="3"/>
<proteinExistence type="inferred from homology"/>